<name>ILVC_CAUVN</name>
<dbReference type="EC" id="1.1.1.86" evidence="1"/>
<dbReference type="EMBL" id="CP001340">
    <property type="protein sequence ID" value="ACL95669.1"/>
    <property type="molecule type" value="Genomic_DNA"/>
</dbReference>
<dbReference type="RefSeq" id="WP_010919981.1">
    <property type="nucleotide sequence ID" value="NC_011916.1"/>
</dbReference>
<dbReference type="RefSeq" id="YP_002517577.1">
    <property type="nucleotide sequence ID" value="NC_011916.1"/>
</dbReference>
<dbReference type="SMR" id="B8GXW2"/>
<dbReference type="GeneID" id="7333455"/>
<dbReference type="KEGG" id="ccs:CCNA_02204"/>
<dbReference type="PATRIC" id="fig|565050.3.peg.2158"/>
<dbReference type="HOGENOM" id="CLU_033821_0_1_5"/>
<dbReference type="OrthoDB" id="9804088at2"/>
<dbReference type="PhylomeDB" id="B8GXW2"/>
<dbReference type="UniPathway" id="UPA00047">
    <property type="reaction ID" value="UER00056"/>
</dbReference>
<dbReference type="UniPathway" id="UPA00049">
    <property type="reaction ID" value="UER00060"/>
</dbReference>
<dbReference type="Proteomes" id="UP000001364">
    <property type="component" value="Chromosome"/>
</dbReference>
<dbReference type="GO" id="GO:0005829">
    <property type="term" value="C:cytosol"/>
    <property type="evidence" value="ECO:0007669"/>
    <property type="project" value="TreeGrafter"/>
</dbReference>
<dbReference type="GO" id="GO:0004455">
    <property type="term" value="F:ketol-acid reductoisomerase activity"/>
    <property type="evidence" value="ECO:0007669"/>
    <property type="project" value="UniProtKB-UniRule"/>
</dbReference>
<dbReference type="GO" id="GO:0000287">
    <property type="term" value="F:magnesium ion binding"/>
    <property type="evidence" value="ECO:0007669"/>
    <property type="project" value="UniProtKB-UniRule"/>
</dbReference>
<dbReference type="GO" id="GO:0050661">
    <property type="term" value="F:NADP binding"/>
    <property type="evidence" value="ECO:0007669"/>
    <property type="project" value="InterPro"/>
</dbReference>
<dbReference type="GO" id="GO:0009097">
    <property type="term" value="P:isoleucine biosynthetic process"/>
    <property type="evidence" value="ECO:0007669"/>
    <property type="project" value="UniProtKB-UniRule"/>
</dbReference>
<dbReference type="GO" id="GO:0009099">
    <property type="term" value="P:L-valine biosynthetic process"/>
    <property type="evidence" value="ECO:0007669"/>
    <property type="project" value="UniProtKB-UniRule"/>
</dbReference>
<dbReference type="FunFam" id="3.40.50.720:FF:000023">
    <property type="entry name" value="Ketol-acid reductoisomerase (NADP(+))"/>
    <property type="match status" value="1"/>
</dbReference>
<dbReference type="Gene3D" id="6.10.240.10">
    <property type="match status" value="1"/>
</dbReference>
<dbReference type="Gene3D" id="3.40.50.720">
    <property type="entry name" value="NAD(P)-binding Rossmann-like Domain"/>
    <property type="match status" value="1"/>
</dbReference>
<dbReference type="HAMAP" id="MF_00435">
    <property type="entry name" value="IlvC"/>
    <property type="match status" value="1"/>
</dbReference>
<dbReference type="InterPro" id="IPR008927">
    <property type="entry name" value="6-PGluconate_DH-like_C_sf"/>
</dbReference>
<dbReference type="InterPro" id="IPR013023">
    <property type="entry name" value="KARI"/>
</dbReference>
<dbReference type="InterPro" id="IPR000506">
    <property type="entry name" value="KARI_C"/>
</dbReference>
<dbReference type="InterPro" id="IPR013116">
    <property type="entry name" value="KARI_N"/>
</dbReference>
<dbReference type="InterPro" id="IPR014359">
    <property type="entry name" value="KARI_prok"/>
</dbReference>
<dbReference type="InterPro" id="IPR036291">
    <property type="entry name" value="NAD(P)-bd_dom_sf"/>
</dbReference>
<dbReference type="NCBIfam" id="TIGR00465">
    <property type="entry name" value="ilvC"/>
    <property type="match status" value="1"/>
</dbReference>
<dbReference type="NCBIfam" id="NF004017">
    <property type="entry name" value="PRK05479.1"/>
    <property type="match status" value="1"/>
</dbReference>
<dbReference type="NCBIfam" id="NF009940">
    <property type="entry name" value="PRK13403.1"/>
    <property type="match status" value="1"/>
</dbReference>
<dbReference type="PANTHER" id="PTHR21371">
    <property type="entry name" value="KETOL-ACID REDUCTOISOMERASE, MITOCHONDRIAL"/>
    <property type="match status" value="1"/>
</dbReference>
<dbReference type="PANTHER" id="PTHR21371:SF1">
    <property type="entry name" value="KETOL-ACID REDUCTOISOMERASE, MITOCHONDRIAL"/>
    <property type="match status" value="1"/>
</dbReference>
<dbReference type="Pfam" id="PF01450">
    <property type="entry name" value="KARI_C"/>
    <property type="match status" value="1"/>
</dbReference>
<dbReference type="Pfam" id="PF07991">
    <property type="entry name" value="KARI_N"/>
    <property type="match status" value="1"/>
</dbReference>
<dbReference type="PIRSF" id="PIRSF000116">
    <property type="entry name" value="IlvC_gammaproteo"/>
    <property type="match status" value="1"/>
</dbReference>
<dbReference type="SUPFAM" id="SSF48179">
    <property type="entry name" value="6-phosphogluconate dehydrogenase C-terminal domain-like"/>
    <property type="match status" value="1"/>
</dbReference>
<dbReference type="SUPFAM" id="SSF51735">
    <property type="entry name" value="NAD(P)-binding Rossmann-fold domains"/>
    <property type="match status" value="1"/>
</dbReference>
<dbReference type="PROSITE" id="PS51851">
    <property type="entry name" value="KARI_C"/>
    <property type="match status" value="1"/>
</dbReference>
<dbReference type="PROSITE" id="PS51850">
    <property type="entry name" value="KARI_N"/>
    <property type="match status" value="1"/>
</dbReference>
<gene>
    <name evidence="1" type="primary">ilvC</name>
    <name type="ordered locus">CCNA_02204</name>
</gene>
<feature type="chain" id="PRO_1000190926" description="Ketol-acid reductoisomerase (NADP(+))">
    <location>
        <begin position="1"/>
        <end position="339"/>
    </location>
</feature>
<feature type="domain" description="KARI N-terminal Rossmann" evidence="2">
    <location>
        <begin position="1"/>
        <end position="182"/>
    </location>
</feature>
<feature type="domain" description="KARI C-terminal knotted" evidence="3">
    <location>
        <begin position="183"/>
        <end position="328"/>
    </location>
</feature>
<feature type="active site" evidence="1">
    <location>
        <position position="108"/>
    </location>
</feature>
<feature type="binding site" evidence="1">
    <location>
        <begin position="24"/>
        <end position="27"/>
    </location>
    <ligand>
        <name>NADP(+)</name>
        <dbReference type="ChEBI" id="CHEBI:58349"/>
    </ligand>
</feature>
<feature type="binding site" evidence="1">
    <location>
        <position position="48"/>
    </location>
    <ligand>
        <name>NADP(+)</name>
        <dbReference type="ChEBI" id="CHEBI:58349"/>
    </ligand>
</feature>
<feature type="binding site" evidence="1">
    <location>
        <position position="51"/>
    </location>
    <ligand>
        <name>NADP(+)</name>
        <dbReference type="ChEBI" id="CHEBI:58349"/>
    </ligand>
</feature>
<feature type="binding site" evidence="1">
    <location>
        <position position="53"/>
    </location>
    <ligand>
        <name>NADP(+)</name>
        <dbReference type="ChEBI" id="CHEBI:58349"/>
    </ligand>
</feature>
<feature type="binding site" evidence="1">
    <location>
        <begin position="83"/>
        <end position="86"/>
    </location>
    <ligand>
        <name>NADP(+)</name>
        <dbReference type="ChEBI" id="CHEBI:58349"/>
    </ligand>
</feature>
<feature type="binding site" evidence="1">
    <location>
        <position position="134"/>
    </location>
    <ligand>
        <name>NADP(+)</name>
        <dbReference type="ChEBI" id="CHEBI:58349"/>
    </ligand>
</feature>
<feature type="binding site" evidence="1">
    <location>
        <position position="191"/>
    </location>
    <ligand>
        <name>Mg(2+)</name>
        <dbReference type="ChEBI" id="CHEBI:18420"/>
        <label>1</label>
    </ligand>
</feature>
<feature type="binding site" evidence="1">
    <location>
        <position position="191"/>
    </location>
    <ligand>
        <name>Mg(2+)</name>
        <dbReference type="ChEBI" id="CHEBI:18420"/>
        <label>2</label>
    </ligand>
</feature>
<feature type="binding site" evidence="1">
    <location>
        <position position="195"/>
    </location>
    <ligand>
        <name>Mg(2+)</name>
        <dbReference type="ChEBI" id="CHEBI:18420"/>
        <label>1</label>
    </ligand>
</feature>
<feature type="binding site" evidence="1">
    <location>
        <position position="227"/>
    </location>
    <ligand>
        <name>Mg(2+)</name>
        <dbReference type="ChEBI" id="CHEBI:18420"/>
        <label>2</label>
    </ligand>
</feature>
<feature type="binding site" evidence="1">
    <location>
        <position position="231"/>
    </location>
    <ligand>
        <name>Mg(2+)</name>
        <dbReference type="ChEBI" id="CHEBI:18420"/>
        <label>2</label>
    </ligand>
</feature>
<feature type="binding site" evidence="1">
    <location>
        <position position="252"/>
    </location>
    <ligand>
        <name>substrate</name>
    </ligand>
</feature>
<reference key="1">
    <citation type="journal article" date="2010" name="J. Bacteriol.">
        <title>The genetic basis of laboratory adaptation in Caulobacter crescentus.</title>
        <authorList>
            <person name="Marks M.E."/>
            <person name="Castro-Rojas C.M."/>
            <person name="Teiling C."/>
            <person name="Du L."/>
            <person name="Kapatral V."/>
            <person name="Walunas T.L."/>
            <person name="Crosson S."/>
        </authorList>
    </citation>
    <scope>NUCLEOTIDE SEQUENCE [LARGE SCALE GENOMIC DNA]</scope>
    <source>
        <strain>NA1000 / CB15N</strain>
    </source>
</reference>
<protein>
    <recommendedName>
        <fullName evidence="1">Ketol-acid reductoisomerase (NADP(+))</fullName>
        <shortName evidence="1">KARI</shortName>
        <ecNumber evidence="1">1.1.1.86</ecNumber>
    </recommendedName>
    <alternativeName>
        <fullName evidence="1">Acetohydroxy-acid isomeroreductase</fullName>
        <shortName evidence="1">AHIR</shortName>
    </alternativeName>
    <alternativeName>
        <fullName evidence="1">Alpha-keto-beta-hydroxylacyl reductoisomerase</fullName>
    </alternativeName>
    <alternativeName>
        <fullName evidence="1">Ketol-acid reductoisomerase type 1</fullName>
    </alternativeName>
    <alternativeName>
        <fullName evidence="1">Ketol-acid reductoisomerase type I</fullName>
    </alternativeName>
</protein>
<keyword id="KW-0028">Amino-acid biosynthesis</keyword>
<keyword id="KW-0100">Branched-chain amino acid biosynthesis</keyword>
<keyword id="KW-0460">Magnesium</keyword>
<keyword id="KW-0479">Metal-binding</keyword>
<keyword id="KW-0521">NADP</keyword>
<keyword id="KW-0560">Oxidoreductase</keyword>
<keyword id="KW-1185">Reference proteome</keyword>
<comment type="function">
    <text evidence="1">Involved in the biosynthesis of branched-chain amino acids (BCAA). Catalyzes an alkyl-migration followed by a ketol-acid reduction of (S)-2-acetolactate (S2AL) to yield (R)-2,3-dihydroxy-isovalerate. In the isomerase reaction, S2AL is rearranged via a Mg-dependent methyl migration to produce 3-hydroxy-3-methyl-2-ketobutyrate (HMKB). In the reductase reaction, this 2-ketoacid undergoes a metal-dependent reduction by NADPH to yield (R)-2,3-dihydroxy-isovalerate.</text>
</comment>
<comment type="catalytic activity">
    <reaction evidence="1">
        <text>(2R)-2,3-dihydroxy-3-methylbutanoate + NADP(+) = (2S)-2-acetolactate + NADPH + H(+)</text>
        <dbReference type="Rhea" id="RHEA:22068"/>
        <dbReference type="ChEBI" id="CHEBI:15378"/>
        <dbReference type="ChEBI" id="CHEBI:49072"/>
        <dbReference type="ChEBI" id="CHEBI:57783"/>
        <dbReference type="ChEBI" id="CHEBI:58349"/>
        <dbReference type="ChEBI" id="CHEBI:58476"/>
        <dbReference type="EC" id="1.1.1.86"/>
    </reaction>
</comment>
<comment type="catalytic activity">
    <reaction evidence="1">
        <text>(2R,3R)-2,3-dihydroxy-3-methylpentanoate + NADP(+) = (S)-2-ethyl-2-hydroxy-3-oxobutanoate + NADPH + H(+)</text>
        <dbReference type="Rhea" id="RHEA:13493"/>
        <dbReference type="ChEBI" id="CHEBI:15378"/>
        <dbReference type="ChEBI" id="CHEBI:49256"/>
        <dbReference type="ChEBI" id="CHEBI:49258"/>
        <dbReference type="ChEBI" id="CHEBI:57783"/>
        <dbReference type="ChEBI" id="CHEBI:58349"/>
        <dbReference type="EC" id="1.1.1.86"/>
    </reaction>
</comment>
<comment type="cofactor">
    <cofactor evidence="1">
        <name>Mg(2+)</name>
        <dbReference type="ChEBI" id="CHEBI:18420"/>
    </cofactor>
    <text evidence="1">Binds 2 magnesium ions per subunit.</text>
</comment>
<comment type="pathway">
    <text evidence="1">Amino-acid biosynthesis; L-isoleucine biosynthesis; L-isoleucine from 2-oxobutanoate: step 2/4.</text>
</comment>
<comment type="pathway">
    <text evidence="1">Amino-acid biosynthesis; L-valine biosynthesis; L-valine from pyruvate: step 2/4.</text>
</comment>
<comment type="similarity">
    <text evidence="1">Belongs to the ketol-acid reductoisomerase family.</text>
</comment>
<organism>
    <name type="scientific">Caulobacter vibrioides (strain NA1000 / CB15N)</name>
    <name type="common">Caulobacter crescentus</name>
    <dbReference type="NCBI Taxonomy" id="565050"/>
    <lineage>
        <taxon>Bacteria</taxon>
        <taxon>Pseudomonadati</taxon>
        <taxon>Pseudomonadota</taxon>
        <taxon>Alphaproteobacteria</taxon>
        <taxon>Caulobacterales</taxon>
        <taxon>Caulobacteraceae</taxon>
        <taxon>Caulobacter</taxon>
    </lineage>
</organism>
<evidence type="ECO:0000255" key="1">
    <source>
        <dbReference type="HAMAP-Rule" id="MF_00435"/>
    </source>
</evidence>
<evidence type="ECO:0000255" key="2">
    <source>
        <dbReference type="PROSITE-ProRule" id="PRU01197"/>
    </source>
</evidence>
<evidence type="ECO:0000255" key="3">
    <source>
        <dbReference type="PROSITE-ProRule" id="PRU01198"/>
    </source>
</evidence>
<accession>B8GXW2</accession>
<sequence>MRVYYDRDADLARILDRKIAIVGYGSQGHAHALNLRDSGIKNVAVALRAGSPTAKKAEGEGLKVMTVAEAAAWADLIMILAPDEHQAAIYKNEIALNIRDGAALLFAHGLNVHFGLIEPKDTIDVLMVAPKGPGHTVRGEYQKGGGVPCLIAVHHNATGNALDLGLAYASAIGGGRSGIIETNFREECETDLFGEQAVLCGGTVELVRAGFETLVEAGYAPEMAYFECLHELKLIVDLMYEGGIANMNYSISNTAEYGEYVTGPRIITPETKAEMKRVLEDIQSGKFVRDFMLENAVGQPSFKATRRRSAEHQIEEVGARLRGMMPWIAKNKLVDQAKN</sequence>
<proteinExistence type="inferred from homology"/>